<protein>
    <recommendedName>
        <fullName evidence="1">Pyridoxal phosphate homeostasis protein</fullName>
        <shortName evidence="1">PLP homeostasis protein</shortName>
    </recommendedName>
</protein>
<reference key="1">
    <citation type="journal article" date="1991" name="Gene">
        <title>Characterisation of a Pseudomonas aeruginosa twitching motility gene and evidence for a specialised protein export system widespread in eubacteria.</title>
        <authorList>
            <person name="Whitchurch C.B."/>
            <person name="Hobbs M."/>
            <person name="Livingston S.P."/>
            <person name="Krishnapillai V."/>
            <person name="Mattick J.S."/>
        </authorList>
    </citation>
    <scope>NUCLEOTIDE SEQUENCE [GENOMIC DNA]</scope>
    <source>
        <strain>ATCC 15692 / DSM 22644 / CIP 104116 / JCM 14847 / LMG 12228 / 1C / PRS 101 / PAO1</strain>
    </source>
</reference>
<reference key="2">
    <citation type="journal article" date="2000" name="Nature">
        <title>Complete genome sequence of Pseudomonas aeruginosa PAO1, an opportunistic pathogen.</title>
        <authorList>
            <person name="Stover C.K."/>
            <person name="Pham X.-Q.T."/>
            <person name="Erwin A.L."/>
            <person name="Mizoguchi S.D."/>
            <person name="Warrener P."/>
            <person name="Hickey M.J."/>
            <person name="Brinkman F.S.L."/>
            <person name="Hufnagle W.O."/>
            <person name="Kowalik D.J."/>
            <person name="Lagrou M."/>
            <person name="Garber R.L."/>
            <person name="Goltry L."/>
            <person name="Tolentino E."/>
            <person name="Westbrock-Wadman S."/>
            <person name="Yuan Y."/>
            <person name="Brody L.L."/>
            <person name="Coulter S.N."/>
            <person name="Folger K.R."/>
            <person name="Kas A."/>
            <person name="Larbig K."/>
            <person name="Lim R.M."/>
            <person name="Smith K.A."/>
            <person name="Spencer D.H."/>
            <person name="Wong G.K.-S."/>
            <person name="Wu Z."/>
            <person name="Paulsen I.T."/>
            <person name="Reizer J."/>
            <person name="Saier M.H. Jr."/>
            <person name="Hancock R.E.W."/>
            <person name="Lory S."/>
            <person name="Olson M.V."/>
        </authorList>
    </citation>
    <scope>NUCLEOTIDE SEQUENCE [LARGE SCALE GENOMIC DNA]</scope>
    <source>
        <strain>ATCC 15692 / DSM 22644 / CIP 104116 / JCM 14847 / LMG 12228 / 1C / PRS 101 / PAO1</strain>
    </source>
</reference>
<reference key="3">
    <citation type="journal article" date="1990" name="Gene">
        <title>Comparison of proC and other housekeeping genes of Pseudomonas aeruginosa with their counterparts in Escherichia coli.</title>
        <authorList>
            <person name="Savioz A."/>
            <person name="Jeenes D.J."/>
            <person name="Kocher H.P."/>
            <person name="Haas D."/>
        </authorList>
    </citation>
    <scope>NUCLEOTIDE SEQUENCE [GENOMIC DNA] OF 202-230</scope>
    <source>
        <strain>ATCC 15692 / DSM 22644 / CIP 104116 / JCM 14847 / LMG 12228 / 1C / PRS 101 / PAO1</strain>
    </source>
</reference>
<dbReference type="EMBL" id="M55524">
    <property type="protein sequence ID" value="AAA25959.1"/>
    <property type="molecule type" value="Genomic_DNA"/>
</dbReference>
<dbReference type="EMBL" id="AE004091">
    <property type="protein sequence ID" value="AAG03783.1"/>
    <property type="molecule type" value="Genomic_DNA"/>
</dbReference>
<dbReference type="EMBL" id="M33557">
    <property type="status" value="NOT_ANNOTATED_CDS"/>
    <property type="molecule type" value="Genomic_DNA"/>
</dbReference>
<dbReference type="PIR" id="JN0060">
    <property type="entry name" value="JN0060"/>
</dbReference>
<dbReference type="RefSeq" id="NP_249085.1">
    <property type="nucleotide sequence ID" value="NC_002516.2"/>
</dbReference>
<dbReference type="RefSeq" id="WP_003084549.1">
    <property type="nucleotide sequence ID" value="NZ_QZGE01000016.1"/>
</dbReference>
<dbReference type="SMR" id="P24562"/>
<dbReference type="FunCoup" id="P24562">
    <property type="interactions" value="641"/>
</dbReference>
<dbReference type="STRING" id="208964.PA0394"/>
<dbReference type="PaxDb" id="208964-PA0394"/>
<dbReference type="GeneID" id="878395"/>
<dbReference type="KEGG" id="pae:PA0394"/>
<dbReference type="PATRIC" id="fig|208964.12.peg.415"/>
<dbReference type="PseudoCAP" id="PA0394"/>
<dbReference type="HOGENOM" id="CLU_059988_0_1_6"/>
<dbReference type="InParanoid" id="P24562"/>
<dbReference type="OrthoDB" id="9804072at2"/>
<dbReference type="PhylomeDB" id="P24562"/>
<dbReference type="BioCyc" id="PAER208964:G1FZ6-398-MONOMER"/>
<dbReference type="Proteomes" id="UP000002438">
    <property type="component" value="Chromosome"/>
</dbReference>
<dbReference type="GO" id="GO:0005737">
    <property type="term" value="C:cytoplasm"/>
    <property type="evidence" value="ECO:0000318"/>
    <property type="project" value="GO_Central"/>
</dbReference>
<dbReference type="GO" id="GO:0030170">
    <property type="term" value="F:pyridoxal phosphate binding"/>
    <property type="evidence" value="ECO:0000318"/>
    <property type="project" value="GO_Central"/>
</dbReference>
<dbReference type="CDD" id="cd06824">
    <property type="entry name" value="PLPDE_III_Yggs_like"/>
    <property type="match status" value="1"/>
</dbReference>
<dbReference type="FunFam" id="3.20.20.10:FF:000004">
    <property type="entry name" value="Pyridoxal phosphate homeostasis protein"/>
    <property type="match status" value="1"/>
</dbReference>
<dbReference type="Gene3D" id="3.20.20.10">
    <property type="entry name" value="Alanine racemase"/>
    <property type="match status" value="1"/>
</dbReference>
<dbReference type="HAMAP" id="MF_02087">
    <property type="entry name" value="PLP_homeostasis"/>
    <property type="match status" value="1"/>
</dbReference>
<dbReference type="InterPro" id="IPR001608">
    <property type="entry name" value="Ala_racemase_N"/>
</dbReference>
<dbReference type="InterPro" id="IPR029066">
    <property type="entry name" value="PLP-binding_barrel"/>
</dbReference>
<dbReference type="InterPro" id="IPR011078">
    <property type="entry name" value="PyrdxlP_homeostasis"/>
</dbReference>
<dbReference type="NCBIfam" id="TIGR00044">
    <property type="entry name" value="YggS family pyridoxal phosphate-dependent enzyme"/>
    <property type="match status" value="1"/>
</dbReference>
<dbReference type="PANTHER" id="PTHR10146">
    <property type="entry name" value="PROLINE SYNTHETASE CO-TRANSCRIBED BACTERIAL HOMOLOG PROTEIN"/>
    <property type="match status" value="1"/>
</dbReference>
<dbReference type="PANTHER" id="PTHR10146:SF14">
    <property type="entry name" value="PYRIDOXAL PHOSPHATE HOMEOSTASIS PROTEIN"/>
    <property type="match status" value="1"/>
</dbReference>
<dbReference type="Pfam" id="PF01168">
    <property type="entry name" value="Ala_racemase_N"/>
    <property type="match status" value="1"/>
</dbReference>
<dbReference type="PIRSF" id="PIRSF004848">
    <property type="entry name" value="YBL036c_PLPDEIII"/>
    <property type="match status" value="1"/>
</dbReference>
<dbReference type="SUPFAM" id="SSF51419">
    <property type="entry name" value="PLP-binding barrel"/>
    <property type="match status" value="1"/>
</dbReference>
<dbReference type="PROSITE" id="PS01211">
    <property type="entry name" value="UPF0001"/>
    <property type="match status" value="1"/>
</dbReference>
<gene>
    <name type="ordered locus">PA0394</name>
</gene>
<proteinExistence type="inferred from homology"/>
<sequence>MSTIAENIAKVAARIREAAQAAGRDPATVGLLAVSKTKPAAAVREAHAAGLRDFGENYLQEALGKQAELADLPLNWHFIGPIQSNKTRPIAEHFQWVHSVDRLKIAQRLSEQRPAGLPPLNVCLQVNVSGEASKSGCAPEDLPALAEAVKQLPNLRLRGLMAIPEPTAERAAQHAAFARLRELLLDLNLGLDTLSMGMSDDLEAAIGEGATWVRIGTALFGARDYGAPAS</sequence>
<organism>
    <name type="scientific">Pseudomonas aeruginosa (strain ATCC 15692 / DSM 22644 / CIP 104116 / JCM 14847 / LMG 12228 / 1C / PRS 101 / PAO1)</name>
    <dbReference type="NCBI Taxonomy" id="208964"/>
    <lineage>
        <taxon>Bacteria</taxon>
        <taxon>Pseudomonadati</taxon>
        <taxon>Pseudomonadota</taxon>
        <taxon>Gammaproteobacteria</taxon>
        <taxon>Pseudomonadales</taxon>
        <taxon>Pseudomonadaceae</taxon>
        <taxon>Pseudomonas</taxon>
    </lineage>
</organism>
<evidence type="ECO:0000255" key="1">
    <source>
        <dbReference type="HAMAP-Rule" id="MF_02087"/>
    </source>
</evidence>
<accession>P24562</accession>
<accession>P25255</accession>
<feature type="chain" id="PRO_0000163206" description="Pyridoxal phosphate homeostasis protein">
    <location>
        <begin position="1"/>
        <end position="230"/>
    </location>
</feature>
<feature type="modified residue" description="N6-(pyridoxal phosphate)lysine" evidence="1">
    <location>
        <position position="36"/>
    </location>
</feature>
<comment type="function">
    <text>Perhaps involved in proline biosynthesis.</text>
</comment>
<comment type="function">
    <text evidence="1">Pyridoxal 5'-phosphate (PLP)-binding protein, which is involved in PLP homeostasis.</text>
</comment>
<comment type="similarity">
    <text evidence="1">Belongs to the pyridoxal phosphate-binding protein YggS/PROSC family.</text>
</comment>
<keyword id="KW-0663">Pyridoxal phosphate</keyword>
<keyword id="KW-1185">Reference proteome</keyword>
<name>PLPHP_PSEAE</name>